<name>NSUN5_HUMAN</name>
<gene>
    <name evidence="14 17" type="primary">NSUN5</name>
    <name evidence="17" type="synonym">NSUN5A</name>
    <name evidence="10" type="synonym">WBSCR20</name>
    <name evidence="11" type="synonym">WBSCR20A</name>
</gene>
<organism>
    <name type="scientific">Homo sapiens</name>
    <name type="common">Human</name>
    <dbReference type="NCBI Taxonomy" id="9606"/>
    <lineage>
        <taxon>Eukaryota</taxon>
        <taxon>Metazoa</taxon>
        <taxon>Chordata</taxon>
        <taxon>Craniata</taxon>
        <taxon>Vertebrata</taxon>
        <taxon>Euteleostomi</taxon>
        <taxon>Mammalia</taxon>
        <taxon>Eutheria</taxon>
        <taxon>Euarchontoglires</taxon>
        <taxon>Primates</taxon>
        <taxon>Haplorrhini</taxon>
        <taxon>Catarrhini</taxon>
        <taxon>Hominidae</taxon>
        <taxon>Homo</taxon>
    </lineage>
</organism>
<reference key="1">
    <citation type="journal article" date="2001" name="Cytogenet. Cell Genet.">
        <title>Characterization of two novel genes, WBSCR20 and WBSCR22, deleted in Williams-Beuren syndrome.</title>
        <authorList>
            <person name="Doll A."/>
            <person name="Grzeschik K.-H."/>
        </authorList>
    </citation>
    <scope>NUCLEOTIDE SEQUENCE [MRNA] (ISOFORM 1)</scope>
    <scope>TISSUE SPECIFICITY</scope>
</reference>
<reference key="2">
    <citation type="journal article" date="2002" name="Hum. Genet.">
        <title>Identification of additional transcripts in the Williams-Beuren syndrome critical region.</title>
        <authorList>
            <person name="Merla G."/>
            <person name="Ucla C."/>
            <person name="Guipponi M."/>
            <person name="Reymond A."/>
        </authorList>
    </citation>
    <scope>NUCLEOTIDE SEQUENCE [MRNA] (ISOFORM 2)</scope>
    <scope>TISSUE SPECIFICITY</scope>
</reference>
<reference key="3">
    <citation type="journal article" date="2004" name="Nat. Genet.">
        <title>Complete sequencing and characterization of 21,243 full-length human cDNAs.</title>
        <authorList>
            <person name="Ota T."/>
            <person name="Suzuki Y."/>
            <person name="Nishikawa T."/>
            <person name="Otsuki T."/>
            <person name="Sugiyama T."/>
            <person name="Irie R."/>
            <person name="Wakamatsu A."/>
            <person name="Hayashi K."/>
            <person name="Sato H."/>
            <person name="Nagai K."/>
            <person name="Kimura K."/>
            <person name="Makita H."/>
            <person name="Sekine M."/>
            <person name="Obayashi M."/>
            <person name="Nishi T."/>
            <person name="Shibahara T."/>
            <person name="Tanaka T."/>
            <person name="Ishii S."/>
            <person name="Yamamoto J."/>
            <person name="Saito K."/>
            <person name="Kawai Y."/>
            <person name="Isono Y."/>
            <person name="Nakamura Y."/>
            <person name="Nagahari K."/>
            <person name="Murakami K."/>
            <person name="Yasuda T."/>
            <person name="Iwayanagi T."/>
            <person name="Wagatsuma M."/>
            <person name="Shiratori A."/>
            <person name="Sudo H."/>
            <person name="Hosoiri T."/>
            <person name="Kaku Y."/>
            <person name="Kodaira H."/>
            <person name="Kondo H."/>
            <person name="Sugawara M."/>
            <person name="Takahashi M."/>
            <person name="Kanda K."/>
            <person name="Yokoi T."/>
            <person name="Furuya T."/>
            <person name="Kikkawa E."/>
            <person name="Omura Y."/>
            <person name="Abe K."/>
            <person name="Kamihara K."/>
            <person name="Katsuta N."/>
            <person name="Sato K."/>
            <person name="Tanikawa M."/>
            <person name="Yamazaki M."/>
            <person name="Ninomiya K."/>
            <person name="Ishibashi T."/>
            <person name="Yamashita H."/>
            <person name="Murakawa K."/>
            <person name="Fujimori K."/>
            <person name="Tanai H."/>
            <person name="Kimata M."/>
            <person name="Watanabe M."/>
            <person name="Hiraoka S."/>
            <person name="Chiba Y."/>
            <person name="Ishida S."/>
            <person name="Ono Y."/>
            <person name="Takiguchi S."/>
            <person name="Watanabe S."/>
            <person name="Yosida M."/>
            <person name="Hotuta T."/>
            <person name="Kusano J."/>
            <person name="Kanehori K."/>
            <person name="Takahashi-Fujii A."/>
            <person name="Hara H."/>
            <person name="Tanase T.-O."/>
            <person name="Nomura Y."/>
            <person name="Togiya S."/>
            <person name="Komai F."/>
            <person name="Hara R."/>
            <person name="Takeuchi K."/>
            <person name="Arita M."/>
            <person name="Imose N."/>
            <person name="Musashino K."/>
            <person name="Yuuki H."/>
            <person name="Oshima A."/>
            <person name="Sasaki N."/>
            <person name="Aotsuka S."/>
            <person name="Yoshikawa Y."/>
            <person name="Matsunawa H."/>
            <person name="Ichihara T."/>
            <person name="Shiohata N."/>
            <person name="Sano S."/>
            <person name="Moriya S."/>
            <person name="Momiyama H."/>
            <person name="Satoh N."/>
            <person name="Takami S."/>
            <person name="Terashima Y."/>
            <person name="Suzuki O."/>
            <person name="Nakagawa S."/>
            <person name="Senoh A."/>
            <person name="Mizoguchi H."/>
            <person name="Goto Y."/>
            <person name="Shimizu F."/>
            <person name="Wakebe H."/>
            <person name="Hishigaki H."/>
            <person name="Watanabe T."/>
            <person name="Sugiyama A."/>
            <person name="Takemoto M."/>
            <person name="Kawakami B."/>
            <person name="Yamazaki M."/>
            <person name="Watanabe K."/>
            <person name="Kumagai A."/>
            <person name="Itakura S."/>
            <person name="Fukuzumi Y."/>
            <person name="Fujimori Y."/>
            <person name="Komiyama M."/>
            <person name="Tashiro H."/>
            <person name="Tanigami A."/>
            <person name="Fujiwara T."/>
            <person name="Ono T."/>
            <person name="Yamada K."/>
            <person name="Fujii Y."/>
            <person name="Ozaki K."/>
            <person name="Hirao M."/>
            <person name="Ohmori Y."/>
            <person name="Kawabata A."/>
            <person name="Hikiji T."/>
            <person name="Kobatake N."/>
            <person name="Inagaki H."/>
            <person name="Ikema Y."/>
            <person name="Okamoto S."/>
            <person name="Okitani R."/>
            <person name="Kawakami T."/>
            <person name="Noguchi S."/>
            <person name="Itoh T."/>
            <person name="Shigeta K."/>
            <person name="Senba T."/>
            <person name="Matsumura K."/>
            <person name="Nakajima Y."/>
            <person name="Mizuno T."/>
            <person name="Morinaga M."/>
            <person name="Sasaki M."/>
            <person name="Togashi T."/>
            <person name="Oyama M."/>
            <person name="Hata H."/>
            <person name="Watanabe M."/>
            <person name="Komatsu T."/>
            <person name="Mizushima-Sugano J."/>
            <person name="Satoh T."/>
            <person name="Shirai Y."/>
            <person name="Takahashi Y."/>
            <person name="Nakagawa K."/>
            <person name="Okumura K."/>
            <person name="Nagase T."/>
            <person name="Nomura N."/>
            <person name="Kikuchi H."/>
            <person name="Masuho Y."/>
            <person name="Yamashita R."/>
            <person name="Nakai K."/>
            <person name="Yada T."/>
            <person name="Nakamura Y."/>
            <person name="Ohara O."/>
            <person name="Isogai T."/>
            <person name="Sugano S."/>
        </authorList>
    </citation>
    <scope>NUCLEOTIDE SEQUENCE [LARGE SCALE MRNA] (ISOFORMS 1; 2; 4 AND 5)</scope>
    <source>
        <tissue>Embryo</tissue>
        <tissue>Mammary tumor</tissue>
        <tissue>Uterus</tissue>
    </source>
</reference>
<reference key="4">
    <citation type="journal article" date="2003" name="Nature">
        <title>The DNA sequence of human chromosome 7.</title>
        <authorList>
            <person name="Hillier L.W."/>
            <person name="Fulton R.S."/>
            <person name="Fulton L.A."/>
            <person name="Graves T.A."/>
            <person name="Pepin K.H."/>
            <person name="Wagner-McPherson C."/>
            <person name="Layman D."/>
            <person name="Maas J."/>
            <person name="Jaeger S."/>
            <person name="Walker R."/>
            <person name="Wylie K."/>
            <person name="Sekhon M."/>
            <person name="Becker M.C."/>
            <person name="O'Laughlin M.D."/>
            <person name="Schaller M.E."/>
            <person name="Fewell G.A."/>
            <person name="Delehaunty K.D."/>
            <person name="Miner T.L."/>
            <person name="Nash W.E."/>
            <person name="Cordes M."/>
            <person name="Du H."/>
            <person name="Sun H."/>
            <person name="Edwards J."/>
            <person name="Bradshaw-Cordum H."/>
            <person name="Ali J."/>
            <person name="Andrews S."/>
            <person name="Isak A."/>
            <person name="Vanbrunt A."/>
            <person name="Nguyen C."/>
            <person name="Du F."/>
            <person name="Lamar B."/>
            <person name="Courtney L."/>
            <person name="Kalicki J."/>
            <person name="Ozersky P."/>
            <person name="Bielicki L."/>
            <person name="Scott K."/>
            <person name="Holmes A."/>
            <person name="Harkins R."/>
            <person name="Harris A."/>
            <person name="Strong C.M."/>
            <person name="Hou S."/>
            <person name="Tomlinson C."/>
            <person name="Dauphin-Kohlberg S."/>
            <person name="Kozlowicz-Reilly A."/>
            <person name="Leonard S."/>
            <person name="Rohlfing T."/>
            <person name="Rock S.M."/>
            <person name="Tin-Wollam A.-M."/>
            <person name="Abbott A."/>
            <person name="Minx P."/>
            <person name="Maupin R."/>
            <person name="Strowmatt C."/>
            <person name="Latreille P."/>
            <person name="Miller N."/>
            <person name="Johnson D."/>
            <person name="Murray J."/>
            <person name="Woessner J.P."/>
            <person name="Wendl M.C."/>
            <person name="Yang S.-P."/>
            <person name="Schultz B.R."/>
            <person name="Wallis J.W."/>
            <person name="Spieth J."/>
            <person name="Bieri T.A."/>
            <person name="Nelson J.O."/>
            <person name="Berkowicz N."/>
            <person name="Wohldmann P.E."/>
            <person name="Cook L.L."/>
            <person name="Hickenbotham M.T."/>
            <person name="Eldred J."/>
            <person name="Williams D."/>
            <person name="Bedell J.A."/>
            <person name="Mardis E.R."/>
            <person name="Clifton S.W."/>
            <person name="Chissoe S.L."/>
            <person name="Marra M.A."/>
            <person name="Raymond C."/>
            <person name="Haugen E."/>
            <person name="Gillett W."/>
            <person name="Zhou Y."/>
            <person name="James R."/>
            <person name="Phelps K."/>
            <person name="Iadanoto S."/>
            <person name="Bubb K."/>
            <person name="Simms E."/>
            <person name="Levy R."/>
            <person name="Clendenning J."/>
            <person name="Kaul R."/>
            <person name="Kent W.J."/>
            <person name="Furey T.S."/>
            <person name="Baertsch R.A."/>
            <person name="Brent M.R."/>
            <person name="Keibler E."/>
            <person name="Flicek P."/>
            <person name="Bork P."/>
            <person name="Suyama M."/>
            <person name="Bailey J.A."/>
            <person name="Portnoy M.E."/>
            <person name="Torrents D."/>
            <person name="Chinwalla A.T."/>
            <person name="Gish W.R."/>
            <person name="Eddy S.R."/>
            <person name="McPherson J.D."/>
            <person name="Olson M.V."/>
            <person name="Eichler E.E."/>
            <person name="Green E.D."/>
            <person name="Waterston R.H."/>
            <person name="Wilson R.K."/>
        </authorList>
    </citation>
    <scope>NUCLEOTIDE SEQUENCE [LARGE SCALE GENOMIC DNA]</scope>
</reference>
<reference key="5">
    <citation type="submission" date="2005-09" db="EMBL/GenBank/DDBJ databases">
        <authorList>
            <person name="Mural R.J."/>
            <person name="Istrail S."/>
            <person name="Sutton G."/>
            <person name="Florea L."/>
            <person name="Halpern A.L."/>
            <person name="Mobarry C.M."/>
            <person name="Lippert R."/>
            <person name="Walenz B."/>
            <person name="Shatkay H."/>
            <person name="Dew I."/>
            <person name="Miller J.R."/>
            <person name="Flanigan M.J."/>
            <person name="Edwards N.J."/>
            <person name="Bolanos R."/>
            <person name="Fasulo D."/>
            <person name="Halldorsson B.V."/>
            <person name="Hannenhalli S."/>
            <person name="Turner R."/>
            <person name="Yooseph S."/>
            <person name="Lu F."/>
            <person name="Nusskern D.R."/>
            <person name="Shue B.C."/>
            <person name="Zheng X.H."/>
            <person name="Zhong F."/>
            <person name="Delcher A.L."/>
            <person name="Huson D.H."/>
            <person name="Kravitz S.A."/>
            <person name="Mouchard L."/>
            <person name="Reinert K."/>
            <person name="Remington K.A."/>
            <person name="Clark A.G."/>
            <person name="Waterman M.S."/>
            <person name="Eichler E.E."/>
            <person name="Adams M.D."/>
            <person name="Hunkapiller M.W."/>
            <person name="Myers E.W."/>
            <person name="Venter J.C."/>
        </authorList>
    </citation>
    <scope>NUCLEOTIDE SEQUENCE [LARGE SCALE GENOMIC DNA]</scope>
</reference>
<reference key="6">
    <citation type="journal article" date="2004" name="Genome Res.">
        <title>The status, quality, and expansion of the NIH full-length cDNA project: the Mammalian Gene Collection (MGC).</title>
        <authorList>
            <consortium name="The MGC Project Team"/>
        </authorList>
    </citation>
    <scope>NUCLEOTIDE SEQUENCE [LARGE SCALE MRNA] (ISOFORMS 1 AND 2)</scope>
    <source>
        <tissue>Lung</tissue>
    </source>
</reference>
<reference key="7">
    <citation type="submission" date="2007-07" db="UniProtKB">
        <authorList>
            <person name="Bienvenut W.V."/>
            <person name="Boldt K."/>
            <person name="von Kriegsheim A.F."/>
            <person name="Kolch W."/>
        </authorList>
    </citation>
    <scope>PROTEIN SEQUENCE OF 2-17; 46-61 AND 73-82</scope>
    <scope>CLEAVAGE OF INITIATOR METHIONINE</scope>
    <scope>ACETYLATION AT GLY-2</scope>
    <scope>IDENTIFICATION BY MASS SPECTROMETRY</scope>
    <source>
        <tissue>Hepatoma</tissue>
    </source>
</reference>
<reference key="8">
    <citation type="journal article" date="2011" name="BMC Syst. Biol.">
        <title>Initial characterization of the human central proteome.</title>
        <authorList>
            <person name="Burkard T.R."/>
            <person name="Planyavsky M."/>
            <person name="Kaupe I."/>
            <person name="Breitwieser F.P."/>
            <person name="Buerckstuemmer T."/>
            <person name="Bennett K.L."/>
            <person name="Superti-Furga G."/>
            <person name="Colinge J."/>
        </authorList>
    </citation>
    <scope>IDENTIFICATION BY MASS SPECTROMETRY [LARGE SCALE ANALYSIS]</scope>
</reference>
<reference key="9">
    <citation type="journal article" date="2011" name="Sci. Signal.">
        <title>System-wide temporal characterization of the proteome and phosphoproteome of human embryonic stem cell differentiation.</title>
        <authorList>
            <person name="Rigbolt K.T."/>
            <person name="Prokhorova T.A."/>
            <person name="Akimov V."/>
            <person name="Henningsen J."/>
            <person name="Johansen P.T."/>
            <person name="Kratchmarova I."/>
            <person name="Kassem M."/>
            <person name="Mann M."/>
            <person name="Olsen J.V."/>
            <person name="Blagoev B."/>
        </authorList>
    </citation>
    <scope>PHOSPHORYLATION [LARGE SCALE ANALYSIS] AT SER-167</scope>
    <scope>IDENTIFICATION BY MASS SPECTROMETRY [LARGE SCALE ANALYSIS]</scope>
</reference>
<reference key="10">
    <citation type="journal article" date="2013" name="J. Proteome Res.">
        <title>Toward a comprehensive characterization of a human cancer cell phosphoproteome.</title>
        <authorList>
            <person name="Zhou H."/>
            <person name="Di Palma S."/>
            <person name="Preisinger C."/>
            <person name="Peng M."/>
            <person name="Polat A.N."/>
            <person name="Heck A.J."/>
            <person name="Mohammed S."/>
        </authorList>
    </citation>
    <scope>PHOSPHORYLATION [LARGE SCALE ANALYSIS] AT SER-167</scope>
    <scope>IDENTIFICATION BY MASS SPECTROMETRY [LARGE SCALE ANALYSIS]</scope>
    <source>
        <tissue>Erythroleukemia</tissue>
    </source>
</reference>
<reference key="11">
    <citation type="journal article" date="2013" name="Nucleic Acids Res.">
        <title>Yeast Nop2 and Rcm1 methylate C2870 and C2278 of the 25S rRNA, respectively.</title>
        <authorList>
            <person name="Sharma S."/>
            <person name="Yang J."/>
            <person name="Watzinger P."/>
            <person name="Kotter P."/>
            <person name="Entian K.D."/>
        </authorList>
    </citation>
    <scope>FUNCTION</scope>
</reference>
<reference key="12">
    <citation type="journal article" date="2019" name="Acta Neuropathol.">
        <title>Epigenetic loss of RNA-methyltransferase NSUN5 in glioma targets ribosomes to drive a stress adaptive translational program.</title>
        <authorList>
            <person name="Janin M."/>
            <person name="Ortiz-Barahona V."/>
            <person name="de Moura M.C."/>
            <person name="Martinez-Cardus A."/>
            <person name="Llinas-Arias P."/>
            <person name="Soler M."/>
            <person name="Nachmani D."/>
            <person name="Pelletier J."/>
            <person name="Schumann U."/>
            <person name="Calleja-Cervantes M.E."/>
            <person name="Moran S."/>
            <person name="Guil S."/>
            <person name="Bueno-Costa A."/>
            <person name="Pineyro D."/>
            <person name="Perez-Salvia M."/>
            <person name="Rossello-Tortella M."/>
            <person name="Pique L."/>
            <person name="Bech-Serra J.J."/>
            <person name="De La Torre C."/>
            <person name="Vidal A."/>
            <person name="Martinez-Iniesta M."/>
            <person name="Martin-Tejera J.F."/>
            <person name="Villanueva A."/>
            <person name="Arias A."/>
            <person name="Cuartas I."/>
            <person name="Aransay A.M."/>
            <person name="La Madrid A.M."/>
            <person name="Carcaboso A.M."/>
            <person name="Santa-Maria V."/>
            <person name="Mora J."/>
            <person name="Fernandez A.F."/>
            <person name="Fraga M.F."/>
            <person name="Aldecoa I."/>
            <person name="Pedrosa L."/>
            <person name="Graus F."/>
            <person name="Vidal N."/>
            <person name="Martinez-Soler F."/>
            <person name="Tortosa A."/>
            <person name="Carrato C."/>
            <person name="Balana C."/>
            <person name="Boudreau M.W."/>
            <person name="Hergenrother P.J."/>
            <person name="Koetter P."/>
            <person name="Entian K.D."/>
            <person name="Hench J."/>
            <person name="Frank S."/>
            <person name="Mansouri S."/>
            <person name="Zadeh G."/>
            <person name="Dans P.D."/>
            <person name="Orozco M."/>
            <person name="Thomas G."/>
            <person name="Blanco S."/>
            <person name="Seoane J."/>
            <person name="Preiss T."/>
            <person name="Pandolfi P.P."/>
            <person name="Esteller M."/>
        </authorList>
    </citation>
    <scope>FUNCTION</scope>
    <scope>CATALYTIC ACTIVITY</scope>
    <scope>INDUCTION</scope>
</reference>
<reference key="13">
    <citation type="journal article" date="2019" name="Nucleic Acids Res.">
        <title>Loss of the ribosomal RNA methyltransferase NSUN5 impairs global protein synthesis and normal growth.</title>
        <authorList>
            <person name="Heissenberger C."/>
            <person name="Liendl L."/>
            <person name="Nagelreiter F."/>
            <person name="Gonskikh Y."/>
            <person name="Yang G."/>
            <person name="Stelzer E.M."/>
            <person name="Krammer T.L."/>
            <person name="Micutkova L."/>
            <person name="Vogt S."/>
            <person name="Kreil D.P."/>
            <person name="Sekot G."/>
            <person name="Siena E."/>
            <person name="Poser I."/>
            <person name="Harreither E."/>
            <person name="Linder A."/>
            <person name="Ehret V."/>
            <person name="Helbich T.H."/>
            <person name="Grillari-Voglauer R."/>
            <person name="Jansen-Duerr P."/>
            <person name="Kos M."/>
            <person name="Polacek N."/>
            <person name="Grillari J."/>
            <person name="Schosserer M."/>
        </authorList>
    </citation>
    <scope>FUNCTION</scope>
    <scope>CATALYTIC ACTIVITY</scope>
    <scope>ACTIVE SITE</scope>
    <scope>SUBCELLULAR LOCATION</scope>
    <scope>MUTAGENESIS OF CYS-308 AND CYS-359</scope>
</reference>
<reference key="14">
    <citation type="submission" date="2006-03" db="PDB data bank">
        <title>The crystal structure of human NSUN5 protein in complex with S-adenosyl-L-methionine.</title>
        <authorList>
            <consortium name="Structural genomics consortium (SGC)"/>
        </authorList>
    </citation>
    <scope>X-RAY CRYSTALLOGRAPHY (1.65 ANGSTROMS) OF 127-429 IN COMPLEX WITH S-ADENOSYL-L-METHIONINE</scope>
</reference>
<feature type="initiator methionine" description="Removed" evidence="9">
    <location>
        <position position="1"/>
    </location>
</feature>
<feature type="chain" id="PRO_0000261669" description="28S rRNA (cytosine-C(5))-methyltransferase">
    <location>
        <begin position="2"/>
        <end position="429"/>
    </location>
</feature>
<feature type="active site" description="Nucleophile" evidence="2 16">
    <location>
        <position position="359"/>
    </location>
</feature>
<feature type="binding site">
    <location>
        <begin position="234"/>
        <end position="240"/>
    </location>
    <ligand>
        <name>S-adenosyl-L-methionine</name>
        <dbReference type="ChEBI" id="CHEBI:59789"/>
    </ligand>
</feature>
<feature type="binding site" evidence="2 8">
    <location>
        <position position="258"/>
    </location>
    <ligand>
        <name>S-adenosyl-L-methionine</name>
        <dbReference type="ChEBI" id="CHEBI:59789"/>
    </ligand>
</feature>
<feature type="binding site" evidence="2 8">
    <location>
        <position position="263"/>
    </location>
    <ligand>
        <name>S-adenosyl-L-methionine</name>
        <dbReference type="ChEBI" id="CHEBI:59789"/>
    </ligand>
</feature>
<feature type="binding site" evidence="2 8">
    <location>
        <position position="305"/>
    </location>
    <ligand>
        <name>S-adenosyl-L-methionine</name>
        <dbReference type="ChEBI" id="CHEBI:59789"/>
    </ligand>
</feature>
<feature type="modified residue" description="N-acetylglycine" evidence="9">
    <location>
        <position position="2"/>
    </location>
</feature>
<feature type="modified residue" description="Phosphoserine" evidence="18 19">
    <location>
        <position position="167"/>
    </location>
</feature>
<feature type="splice variant" id="VSP_021752" description="In isoform 3." evidence="15">
    <location>
        <begin position="1"/>
        <end position="57"/>
    </location>
</feature>
<feature type="splice variant" id="VSP_021753" description="In isoform 3." evidence="15">
    <original>GLLRAEKKLRPHLAK</original>
    <variation>MLRAFLFLSLFPHSQ</variation>
    <location>
        <begin position="58"/>
        <end position="72"/>
    </location>
</feature>
<feature type="splice variant" id="VSP_045492" description="In isoform 5." evidence="12">
    <location>
        <begin position="72"/>
        <end position="109"/>
    </location>
</feature>
<feature type="splice variant" id="VSP_021754" description="In isoform 3." evidence="15">
    <original>KIFAFDLDAKRLASMATLLARAGVSCCELAEEDFLAVSPSDPRYHEVHYILLDPSCSGSGMPSRQLEEPGAGTPSPVRLHALAGFQQRALCHALTFPSLQRLVYSTCSLCQEENEDVVRDALQQNPGAF</original>
    <variation>SLPLTWMPSGWHPWPRCWPGLASLAVNWLRRTSWRSPPRIHATMRSTTSCWILPAVARVCRADSWRSPGQAHLARCVCMPWQGSSSEPCATRSLSLPCSGSSTPRAPSARRRMKTWCEMRCSRTRAPSG</variation>
    <location>
        <begin position="253"/>
        <end position="381"/>
    </location>
</feature>
<feature type="splice variant" id="VSP_021755" description="In isoform 3." evidence="15">
    <location>
        <begin position="382"/>
        <end position="429"/>
    </location>
</feature>
<feature type="splice variant" id="VSP_021756" description="In isoform 2." evidence="11 12 13">
    <original>R</original>
    <variation>SSASQAKASAPERTPSPAPKRKKRQQRAAAGACTPPCT</variation>
    <location>
        <position position="429"/>
    </location>
</feature>
<feature type="splice variant" id="VSP_043352" description="In isoform 4." evidence="12">
    <original>R</original>
    <variation>SLTGQSISTRTHTQPSPKEKEETAKSRSRCLHTALHIAEAPG</variation>
    <location>
        <position position="429"/>
    </location>
</feature>
<feature type="sequence variant" id="VAR_051889" description="In dbSNP:rs34913552.">
    <original>P</original>
    <variation>S</variation>
    <location>
        <position position="183"/>
    </location>
</feature>
<feature type="mutagenesis site" description="Abolished methyltransferase activity without affecting nucleolar localization; when associated with S-359." evidence="7">
    <original>C</original>
    <variation>S</variation>
    <location>
        <position position="308"/>
    </location>
</feature>
<feature type="mutagenesis site" description="Abolished methyltransferase activity without affecting nucleolar localization; when associated with S-308." evidence="7">
    <original>C</original>
    <variation>S</variation>
    <location>
        <position position="359"/>
    </location>
</feature>
<feature type="sequence conflict" description="In Ref. 1; AAL16067." evidence="15" ref="1">
    <original>E</original>
    <variation>G</variation>
    <location>
        <position position="42"/>
    </location>
</feature>
<feature type="sequence conflict" description="In Ref. 1; AAL16067." evidence="15" ref="1">
    <original>A</original>
    <variation>P</variation>
    <location>
        <position position="100"/>
    </location>
</feature>
<feature type="sequence conflict" description="In Ref. 3; BAG54316." evidence="15" ref="3">
    <original>V</original>
    <variation>A</variation>
    <location>
        <position position="425"/>
    </location>
</feature>
<feature type="strand" evidence="20">
    <location>
        <begin position="136"/>
        <end position="140"/>
    </location>
</feature>
<feature type="turn" evidence="20">
    <location>
        <begin position="142"/>
        <end position="144"/>
    </location>
</feature>
<feature type="helix" evidence="20">
    <location>
        <begin position="147"/>
        <end position="156"/>
    </location>
</feature>
<feature type="strand" evidence="20">
    <location>
        <begin position="160"/>
        <end position="164"/>
    </location>
</feature>
<feature type="helix" evidence="20">
    <location>
        <begin position="168"/>
        <end position="172"/>
    </location>
</feature>
<feature type="strand" evidence="20">
    <location>
        <begin position="178"/>
        <end position="181"/>
    </location>
</feature>
<feature type="strand" evidence="20">
    <location>
        <begin position="183"/>
        <end position="185"/>
    </location>
</feature>
<feature type="strand" evidence="20">
    <location>
        <begin position="188"/>
        <end position="191"/>
    </location>
</feature>
<feature type="helix" evidence="20">
    <location>
        <begin position="201"/>
        <end position="204"/>
    </location>
</feature>
<feature type="strand" evidence="20">
    <location>
        <begin position="207"/>
        <end position="210"/>
    </location>
</feature>
<feature type="helix" evidence="20">
    <location>
        <begin position="214"/>
        <end position="216"/>
    </location>
</feature>
<feature type="helix" evidence="20">
    <location>
        <begin position="217"/>
        <end position="222"/>
    </location>
</feature>
<feature type="strand" evidence="20">
    <location>
        <begin position="229"/>
        <end position="234"/>
    </location>
</feature>
<feature type="helix" evidence="20">
    <location>
        <begin position="239"/>
        <end position="248"/>
    </location>
</feature>
<feature type="strand" evidence="20">
    <location>
        <begin position="252"/>
        <end position="259"/>
    </location>
</feature>
<feature type="helix" evidence="20">
    <location>
        <begin position="261"/>
        <end position="273"/>
    </location>
</feature>
<feature type="strand" evidence="20">
    <location>
        <begin position="278"/>
        <end position="283"/>
    </location>
</feature>
<feature type="helix" evidence="20">
    <location>
        <begin position="286"/>
        <end position="288"/>
    </location>
</feature>
<feature type="helix" evidence="20">
    <location>
        <begin position="294"/>
        <end position="296"/>
    </location>
</feature>
<feature type="strand" evidence="20">
    <location>
        <begin position="299"/>
        <end position="304"/>
    </location>
</feature>
<feature type="helix" evidence="20">
    <location>
        <begin position="331"/>
        <end position="345"/>
    </location>
</feature>
<feature type="strand" evidence="20">
    <location>
        <begin position="353"/>
        <end position="359"/>
    </location>
</feature>
<feature type="helix" evidence="20">
    <location>
        <begin position="363"/>
        <end position="365"/>
    </location>
</feature>
<feature type="helix" evidence="20">
    <location>
        <begin position="367"/>
        <end position="374"/>
    </location>
</feature>
<feature type="turn" evidence="20">
    <location>
        <begin position="378"/>
        <end position="380"/>
    </location>
</feature>
<feature type="strand" evidence="20">
    <location>
        <begin position="381"/>
        <end position="383"/>
    </location>
</feature>
<feature type="strand" evidence="20">
    <location>
        <begin position="396"/>
        <end position="398"/>
    </location>
</feature>
<feature type="helix" evidence="20">
    <location>
        <begin position="401"/>
        <end position="403"/>
    </location>
</feature>
<feature type="strand" evidence="20">
    <location>
        <begin position="404"/>
        <end position="407"/>
    </location>
</feature>
<feature type="helix" evidence="20">
    <location>
        <begin position="409"/>
        <end position="412"/>
    </location>
</feature>
<feature type="strand" evidence="20">
    <location>
        <begin position="416"/>
        <end position="424"/>
    </location>
</feature>
<evidence type="ECO:0000250" key="1">
    <source>
        <dbReference type="UniProtKB" id="Q8K4F6"/>
    </source>
</evidence>
<evidence type="ECO:0000255" key="2">
    <source>
        <dbReference type="PROSITE-ProRule" id="PRU01023"/>
    </source>
</evidence>
<evidence type="ECO:0000269" key="3">
    <source>
    </source>
</evidence>
<evidence type="ECO:0000269" key="4">
    <source>
    </source>
</evidence>
<evidence type="ECO:0000269" key="5">
    <source>
    </source>
</evidence>
<evidence type="ECO:0000269" key="6">
    <source>
    </source>
</evidence>
<evidence type="ECO:0000269" key="7">
    <source>
    </source>
</evidence>
<evidence type="ECO:0000269" key="8">
    <source ref="14"/>
</evidence>
<evidence type="ECO:0000269" key="9">
    <source ref="7"/>
</evidence>
<evidence type="ECO:0000303" key="10">
    <source>
    </source>
</evidence>
<evidence type="ECO:0000303" key="11">
    <source>
    </source>
</evidence>
<evidence type="ECO:0000303" key="12">
    <source>
    </source>
</evidence>
<evidence type="ECO:0000303" key="13">
    <source>
    </source>
</evidence>
<evidence type="ECO:0000303" key="14">
    <source>
    </source>
</evidence>
<evidence type="ECO:0000305" key="15"/>
<evidence type="ECO:0000305" key="16">
    <source>
    </source>
</evidence>
<evidence type="ECO:0000312" key="17">
    <source>
        <dbReference type="HGNC" id="HGNC:16385"/>
    </source>
</evidence>
<evidence type="ECO:0007744" key="18">
    <source>
    </source>
</evidence>
<evidence type="ECO:0007744" key="19">
    <source>
    </source>
</evidence>
<evidence type="ECO:0007829" key="20">
    <source>
        <dbReference type="PDB" id="2B9E"/>
    </source>
</evidence>
<comment type="function">
    <text evidence="1 5 6 7">S-adenosyl-L-methionine-dependent methyltransferase that specifically methylates the C(5) position of cytosine 3782 (m5C3782) in 28S rRNA (PubMed:23913415, PubMed:31428936, PubMed:31722427). m5C3782 promotes protein translation without affecting ribosome biogenesis and fidelity (PubMed:31428936, PubMed:31722427). Required for corpus callosum and cerebral cortex development (By similarity).</text>
</comment>
<comment type="catalytic activity">
    <reaction evidence="6 7">
        <text>cytidine(3782) in 28S rRNA + S-adenosyl-L-methionine = 5-methylcytidine(3782) in 28S rRNA + S-adenosyl-L-homocysteine + H(+)</text>
        <dbReference type="Rhea" id="RHEA:47784"/>
        <dbReference type="Rhea" id="RHEA-COMP:11913"/>
        <dbReference type="Rhea" id="RHEA-COMP:11914"/>
        <dbReference type="ChEBI" id="CHEBI:15378"/>
        <dbReference type="ChEBI" id="CHEBI:57856"/>
        <dbReference type="ChEBI" id="CHEBI:59789"/>
        <dbReference type="ChEBI" id="CHEBI:74483"/>
        <dbReference type="ChEBI" id="CHEBI:82748"/>
    </reaction>
    <physiologicalReaction direction="left-to-right" evidence="6 7">
        <dbReference type="Rhea" id="RHEA:47785"/>
    </physiologicalReaction>
</comment>
<comment type="subcellular location">
    <subcellularLocation>
        <location evidence="7">Nucleus</location>
        <location evidence="7">Nucleolus</location>
    </subcellularLocation>
</comment>
<comment type="alternative products">
    <event type="alternative splicing"/>
    <isoform>
        <id>Q96P11-1</id>
        <name>1</name>
        <sequence type="displayed"/>
    </isoform>
    <isoform>
        <id>Q96P11-2</id>
        <name>2</name>
        <sequence type="described" ref="VSP_021756"/>
    </isoform>
    <isoform>
        <id>Q96P11-3</id>
        <name>3</name>
        <sequence type="described" ref="VSP_021752 VSP_021753 VSP_021754 VSP_021755"/>
    </isoform>
    <isoform>
        <id>Q96P11-4</id>
        <name>4</name>
        <sequence type="described" ref="VSP_043352"/>
    </isoform>
    <isoform>
        <id>Q96P11-5</id>
        <name>5</name>
        <sequence type="described" ref="VSP_045492"/>
    </isoform>
</comment>
<comment type="tissue specificity">
    <text evidence="3 4">Ubiquitous (PubMed:11978965, PubMed:12073013). Detected in placenta, heart and skeletal muscle (PubMed:11978965, PubMed:12073013).</text>
</comment>
<comment type="induction">
    <text evidence="6">Down-regulated in some glioma; epigenetic inactivation is a hallmark of glioma patients with long-term survival.</text>
</comment>
<comment type="disease">
    <text evidence="3 4 7">NSUN5 is located in the Williams-Beuren syndrome (WBS) critical region (PubMed:11978965, PubMed:12073013). WBS results from a hemizygous deletion of several genes on chromosome 7q11.23, thought to arise as a consequence of unequal crossing over between highly homologous low-copy repeat sequences flanking the deleted region (PubMed:11978965, PubMed:12073013). Its deletion in WBS results in decreased methylation of the C(5) position of cytosine 3782 (m5C3782) in 28S rRNA (PubMed:31722427).</text>
</comment>
<comment type="similarity">
    <text evidence="2">Belongs to the class I-like SAM-binding methyltransferase superfamily. RsmB/NOP family.</text>
</comment>
<protein>
    <recommendedName>
        <fullName evidence="15">28S rRNA (cytosine-C(5))-methyltransferase</fullName>
        <ecNumber evidence="7">2.1.1.-</ecNumber>
    </recommendedName>
    <alternativeName>
        <fullName evidence="17">NOL1-related protein</fullName>
        <shortName evidence="17">NOL1R</shortName>
    </alternativeName>
    <alternativeName>
        <fullName evidence="14">NOL1/NOP2/Sun domain family member 5</fullName>
    </alternativeName>
    <alternativeName>
        <fullName evidence="11">Williams-Beuren syndrome chromosomal region 20A protein</fullName>
    </alternativeName>
</protein>
<proteinExistence type="evidence at protein level"/>
<sequence length="429" mass="46692">MGLYAAAAGVLAGVESRQGSIKGLVYSSNFQNVKQLYALVCETQRYSAVLDAVIASAGLLRAEKKLRPHLAKVLVYELLLGKGFRGGGGRWKALLGRHQARLKAELARLKVHRGVSRNEDLLEVGSRPGPASQLPRFVRVNTLKTCSDDVVDYFKRQGFSYQGRASSLDDLRALKGKHFLLDPLMPELLVFPAQTDLHEHPLYRAGHLILQDRASCLPAMLLDPPPGSHVIDACAAPGNKTSHLAALLKNQGKIFAFDLDAKRLASMATLLARAGVSCCELAEEDFLAVSPSDPRYHEVHYILLDPSCSGSGMPSRQLEEPGAGTPSPVRLHALAGFQQRALCHALTFPSLQRLVYSTCSLCQEENEDVVRDALQQNPGAFRLAPALPAWPHRGLSTFPGAEHCLRASPETTLSSGFFVAVIERVEVPR</sequence>
<accession>Q96P11</accession>
<accession>B3KX04</accession>
<accession>B4DP79</accession>
<accession>G3V0G9</accession>
<accession>Q6ZUI8</accession>
<accession>Q96HT9</accession>
<accession>Q9NW70</accession>
<keyword id="KW-0002">3D-structure</keyword>
<keyword id="KW-0007">Acetylation</keyword>
<keyword id="KW-0025">Alternative splicing</keyword>
<keyword id="KW-0903">Direct protein sequencing</keyword>
<keyword id="KW-0489">Methyltransferase</keyword>
<keyword id="KW-0539">Nucleus</keyword>
<keyword id="KW-0597">Phosphoprotein</keyword>
<keyword id="KW-1267">Proteomics identification</keyword>
<keyword id="KW-1185">Reference proteome</keyword>
<keyword id="KW-0694">RNA-binding</keyword>
<keyword id="KW-0698">rRNA processing</keyword>
<keyword id="KW-0949">S-adenosyl-L-methionine</keyword>
<keyword id="KW-0808">Transferase</keyword>
<keyword id="KW-0856">Williams-Beuren syndrome</keyword>
<dbReference type="EC" id="2.1.1.-" evidence="7"/>
<dbReference type="EMBL" id="AF420249">
    <property type="protein sequence ID" value="AAL16067.1"/>
    <property type="molecule type" value="mRNA"/>
</dbReference>
<dbReference type="EMBL" id="AF412028">
    <property type="protein sequence ID" value="AAM62310.1"/>
    <property type="molecule type" value="mRNA"/>
</dbReference>
<dbReference type="EMBL" id="AK001129">
    <property type="protein sequence ID" value="BAA91515.1"/>
    <property type="molecule type" value="mRNA"/>
</dbReference>
<dbReference type="EMBL" id="AK125667">
    <property type="status" value="NOT_ANNOTATED_CDS"/>
    <property type="molecule type" value="mRNA"/>
</dbReference>
<dbReference type="EMBL" id="AK126375">
    <property type="protein sequence ID" value="BAG54316.1"/>
    <property type="molecule type" value="mRNA"/>
</dbReference>
<dbReference type="EMBL" id="AK298221">
    <property type="protein sequence ID" value="BAG60491.1"/>
    <property type="molecule type" value="mRNA"/>
</dbReference>
<dbReference type="EMBL" id="AC073841">
    <property type="protein sequence ID" value="AAQ96838.1"/>
    <property type="molecule type" value="Genomic_DNA"/>
</dbReference>
<dbReference type="EMBL" id="AC073841">
    <property type="protein sequence ID" value="AAQ96839.1"/>
    <property type="molecule type" value="Genomic_DNA"/>
</dbReference>
<dbReference type="EMBL" id="CH471200">
    <property type="protein sequence ID" value="EAW69694.1"/>
    <property type="molecule type" value="Genomic_DNA"/>
</dbReference>
<dbReference type="EMBL" id="BC008084">
    <property type="protein sequence ID" value="AAH08084.1"/>
    <property type="molecule type" value="mRNA"/>
</dbReference>
<dbReference type="CCDS" id="CCDS55118.1">
    <molecule id="Q96P11-5"/>
</dbReference>
<dbReference type="CCDS" id="CCDS55119.1">
    <molecule id="Q96P11-4"/>
</dbReference>
<dbReference type="CCDS" id="CCDS5546.1">
    <molecule id="Q96P11-2"/>
</dbReference>
<dbReference type="CCDS" id="CCDS5547.1">
    <molecule id="Q96P11-1"/>
</dbReference>
<dbReference type="RefSeq" id="NP_001161819.1">
    <molecule id="Q96P11-4"/>
    <property type="nucleotide sequence ID" value="NM_001168347.3"/>
</dbReference>
<dbReference type="RefSeq" id="NP_001161820.1">
    <molecule id="Q96P11-5"/>
    <property type="nucleotide sequence ID" value="NM_001168348.3"/>
</dbReference>
<dbReference type="RefSeq" id="NP_060514.1">
    <molecule id="Q96P11-1"/>
    <property type="nucleotide sequence ID" value="NM_018044.5"/>
</dbReference>
<dbReference type="RefSeq" id="NP_683759.1">
    <molecule id="Q96P11-2"/>
    <property type="nucleotide sequence ID" value="NM_148956.4"/>
</dbReference>
<dbReference type="PDB" id="2B9E">
    <property type="method" value="X-ray"/>
    <property type="resolution" value="1.65 A"/>
    <property type="chains" value="A=127-429"/>
</dbReference>
<dbReference type="PDBsum" id="2B9E"/>
<dbReference type="SMR" id="Q96P11"/>
<dbReference type="BioGRID" id="120820">
    <property type="interactions" value="65"/>
</dbReference>
<dbReference type="FunCoup" id="Q96P11">
    <property type="interactions" value="1866"/>
</dbReference>
<dbReference type="IntAct" id="Q96P11">
    <property type="interactions" value="37"/>
</dbReference>
<dbReference type="MINT" id="Q96P11"/>
<dbReference type="STRING" id="9606.ENSP00000309126"/>
<dbReference type="ChEMBL" id="CHEMBL4802014"/>
<dbReference type="GlyGen" id="Q96P11">
    <property type="glycosylation" value="2 sites, 1 O-linked glycan (1 site)"/>
</dbReference>
<dbReference type="iPTMnet" id="Q96P11"/>
<dbReference type="PhosphoSitePlus" id="Q96P11"/>
<dbReference type="SwissPalm" id="Q96P11"/>
<dbReference type="BioMuta" id="NSUN5"/>
<dbReference type="DMDM" id="118573085"/>
<dbReference type="jPOST" id="Q96P11"/>
<dbReference type="MassIVE" id="Q96P11"/>
<dbReference type="PaxDb" id="9606-ENSP00000309126"/>
<dbReference type="PeptideAtlas" id="Q96P11"/>
<dbReference type="ProteomicsDB" id="32194"/>
<dbReference type="ProteomicsDB" id="77590">
    <molecule id="Q96P11-1"/>
</dbReference>
<dbReference type="ProteomicsDB" id="77591">
    <molecule id="Q96P11-2"/>
</dbReference>
<dbReference type="ProteomicsDB" id="77592">
    <molecule id="Q96P11-3"/>
</dbReference>
<dbReference type="ProteomicsDB" id="77593">
    <molecule id="Q96P11-4"/>
</dbReference>
<dbReference type="Pumba" id="Q96P11"/>
<dbReference type="Antibodypedia" id="14275">
    <property type="antibodies" value="82 antibodies from 22 providers"/>
</dbReference>
<dbReference type="DNASU" id="55695"/>
<dbReference type="Ensembl" id="ENST00000252594.10">
    <molecule id="Q96P11-1"/>
    <property type="protein sequence ID" value="ENSP00000252594.6"/>
    <property type="gene ID" value="ENSG00000130305.17"/>
</dbReference>
<dbReference type="Ensembl" id="ENST00000310326.8">
    <molecule id="Q96P11-4"/>
    <property type="protein sequence ID" value="ENSP00000309126.8"/>
    <property type="gene ID" value="ENSG00000130305.17"/>
</dbReference>
<dbReference type="Ensembl" id="ENST00000428206.5">
    <molecule id="Q96P11-5"/>
    <property type="protein sequence ID" value="ENSP00000393081.1"/>
    <property type="gene ID" value="ENSG00000130305.17"/>
</dbReference>
<dbReference type="Ensembl" id="ENST00000438747.7">
    <molecule id="Q96P11-2"/>
    <property type="protein sequence ID" value="ENSP00000388464.2"/>
    <property type="gene ID" value="ENSG00000130305.17"/>
</dbReference>
<dbReference type="GeneID" id="55695"/>
<dbReference type="KEGG" id="hsa:55695"/>
<dbReference type="MANE-Select" id="ENST00000438747.7">
    <molecule id="Q96P11-2"/>
    <property type="protein sequence ID" value="ENSP00000388464.2"/>
    <property type="RefSeq nucleotide sequence ID" value="NM_148956.4"/>
    <property type="RefSeq protein sequence ID" value="NP_683759.1"/>
</dbReference>
<dbReference type="UCSC" id="uc003txv.5">
    <molecule id="Q96P11-1"/>
    <property type="organism name" value="human"/>
</dbReference>
<dbReference type="AGR" id="HGNC:16385"/>
<dbReference type="CTD" id="55695"/>
<dbReference type="DisGeNET" id="55695"/>
<dbReference type="GeneCards" id="NSUN5"/>
<dbReference type="HGNC" id="HGNC:16385">
    <property type="gene designation" value="NSUN5"/>
</dbReference>
<dbReference type="HPA" id="ENSG00000130305">
    <property type="expression patterns" value="Low tissue specificity"/>
</dbReference>
<dbReference type="MIM" id="615732">
    <property type="type" value="gene"/>
</dbReference>
<dbReference type="neXtProt" id="NX_Q96P11"/>
<dbReference type="OpenTargets" id="ENSG00000130305"/>
<dbReference type="PharmGKB" id="PA134993779"/>
<dbReference type="VEuPathDB" id="HostDB:ENSG00000130305"/>
<dbReference type="eggNOG" id="KOG2360">
    <property type="taxonomic scope" value="Eukaryota"/>
</dbReference>
<dbReference type="GeneTree" id="ENSGT00940000155974"/>
<dbReference type="HOGENOM" id="CLU_005316_7_4_1"/>
<dbReference type="InParanoid" id="Q96P11"/>
<dbReference type="OMA" id="SFKSRIY"/>
<dbReference type="OrthoDB" id="435282at2759"/>
<dbReference type="PAN-GO" id="Q96P11">
    <property type="GO annotations" value="2 GO annotations based on evolutionary models"/>
</dbReference>
<dbReference type="PhylomeDB" id="Q96P11"/>
<dbReference type="TreeFam" id="TF314285"/>
<dbReference type="PathwayCommons" id="Q96P11"/>
<dbReference type="SignaLink" id="Q96P11"/>
<dbReference type="BioGRID-ORCS" id="55695">
    <property type="hits" value="29 hits in 1153 CRISPR screens"/>
</dbReference>
<dbReference type="CD-CODE" id="91857CE7">
    <property type="entry name" value="Nucleolus"/>
</dbReference>
<dbReference type="ChiTaRS" id="NSUN5">
    <property type="organism name" value="human"/>
</dbReference>
<dbReference type="EvolutionaryTrace" id="Q96P11"/>
<dbReference type="GeneWiki" id="NSUN5"/>
<dbReference type="GenomeRNAi" id="55695"/>
<dbReference type="Pharos" id="Q96P11">
    <property type="development level" value="Tbio"/>
</dbReference>
<dbReference type="PRO" id="PR:Q96P11"/>
<dbReference type="Proteomes" id="UP000005640">
    <property type="component" value="Chromosome 7"/>
</dbReference>
<dbReference type="RNAct" id="Q96P11">
    <property type="molecule type" value="protein"/>
</dbReference>
<dbReference type="Bgee" id="ENSG00000130305">
    <property type="expression patterns" value="Expressed in granulocyte and 96 other cell types or tissues"/>
</dbReference>
<dbReference type="ExpressionAtlas" id="Q96P11">
    <property type="expression patterns" value="baseline and differential"/>
</dbReference>
<dbReference type="GO" id="GO:0005730">
    <property type="term" value="C:nucleolus"/>
    <property type="evidence" value="ECO:0000314"/>
    <property type="project" value="HPA"/>
</dbReference>
<dbReference type="GO" id="GO:0005654">
    <property type="term" value="C:nucleoplasm"/>
    <property type="evidence" value="ECO:0000314"/>
    <property type="project" value="HPA"/>
</dbReference>
<dbReference type="GO" id="GO:0003723">
    <property type="term" value="F:RNA binding"/>
    <property type="evidence" value="ECO:0007005"/>
    <property type="project" value="UniProtKB"/>
</dbReference>
<dbReference type="GO" id="GO:0009383">
    <property type="term" value="F:rRNA (cytosine-C5-)-methyltransferase activity"/>
    <property type="evidence" value="ECO:0000314"/>
    <property type="project" value="UniProtKB"/>
</dbReference>
<dbReference type="GO" id="GO:0021987">
    <property type="term" value="P:cerebral cortex development"/>
    <property type="evidence" value="ECO:0000250"/>
    <property type="project" value="UniProtKB"/>
</dbReference>
<dbReference type="GO" id="GO:0050890">
    <property type="term" value="P:cognition"/>
    <property type="evidence" value="ECO:0000250"/>
    <property type="project" value="UniProtKB"/>
</dbReference>
<dbReference type="GO" id="GO:0022038">
    <property type="term" value="P:corpus callosum development"/>
    <property type="evidence" value="ECO:0000250"/>
    <property type="project" value="UniProtKB"/>
</dbReference>
<dbReference type="GO" id="GO:0014003">
    <property type="term" value="P:oligodendrocyte development"/>
    <property type="evidence" value="ECO:0000250"/>
    <property type="project" value="UniProtKB"/>
</dbReference>
<dbReference type="GO" id="GO:0045727">
    <property type="term" value="P:positive regulation of translation"/>
    <property type="evidence" value="ECO:0000315"/>
    <property type="project" value="UniProtKB"/>
</dbReference>
<dbReference type="GO" id="GO:0031641">
    <property type="term" value="P:regulation of myelination"/>
    <property type="evidence" value="ECO:0000250"/>
    <property type="project" value="UniProtKB"/>
</dbReference>
<dbReference type="GO" id="GO:0070475">
    <property type="term" value="P:rRNA base methylation"/>
    <property type="evidence" value="ECO:0000314"/>
    <property type="project" value="UniProtKB"/>
</dbReference>
<dbReference type="CDD" id="cd02440">
    <property type="entry name" value="AdoMet_MTases"/>
    <property type="match status" value="1"/>
</dbReference>
<dbReference type="FunFam" id="3.30.70.1170:FF:000004">
    <property type="entry name" value="probable 28S rRNA (Cytosine-C(5))-methyltransferase isoform X2"/>
    <property type="match status" value="1"/>
</dbReference>
<dbReference type="FunFam" id="3.40.50.150:FF:000139">
    <property type="entry name" value="probable 28S rRNA (Cytosine-C(5))-methyltransferase isoform X2"/>
    <property type="match status" value="1"/>
</dbReference>
<dbReference type="Gene3D" id="3.30.70.1170">
    <property type="entry name" value="Sun protein, domain 3"/>
    <property type="match status" value="1"/>
</dbReference>
<dbReference type="Gene3D" id="3.40.50.150">
    <property type="entry name" value="Vaccinia Virus protein VP39"/>
    <property type="match status" value="1"/>
</dbReference>
<dbReference type="InterPro" id="IPR049560">
    <property type="entry name" value="MeTrfase_RsmB-F_NOP2_cat"/>
</dbReference>
<dbReference type="InterPro" id="IPR001678">
    <property type="entry name" value="MeTrfase_RsmB-F_NOP2_dom"/>
</dbReference>
<dbReference type="InterPro" id="IPR049561">
    <property type="entry name" value="NSUN5_7_fdxn-like"/>
</dbReference>
<dbReference type="InterPro" id="IPR048889">
    <property type="entry name" value="NSUN5_RCM1_N"/>
</dbReference>
<dbReference type="InterPro" id="IPR023267">
    <property type="entry name" value="RCMT"/>
</dbReference>
<dbReference type="InterPro" id="IPR029063">
    <property type="entry name" value="SAM-dependent_MTases_sf"/>
</dbReference>
<dbReference type="PANTHER" id="PTHR22807:SF4">
    <property type="entry name" value="28S RRNA (CYTOSINE-C(5))-METHYLTRANSFERASE"/>
    <property type="match status" value="1"/>
</dbReference>
<dbReference type="PANTHER" id="PTHR22807">
    <property type="entry name" value="NOP2 YEAST -RELATED NOL1/NOP2/FMU SUN DOMAIN-CONTAINING"/>
    <property type="match status" value="1"/>
</dbReference>
<dbReference type="Pfam" id="PF01189">
    <property type="entry name" value="Methyltr_RsmB-F"/>
    <property type="match status" value="1"/>
</dbReference>
<dbReference type="Pfam" id="PF21148">
    <property type="entry name" value="NSUN5_fdxn-like"/>
    <property type="match status" value="1"/>
</dbReference>
<dbReference type="Pfam" id="PF21153">
    <property type="entry name" value="NSUN5_N"/>
    <property type="match status" value="1"/>
</dbReference>
<dbReference type="PRINTS" id="PR02008">
    <property type="entry name" value="RCMTFAMILY"/>
</dbReference>
<dbReference type="SUPFAM" id="SSF53335">
    <property type="entry name" value="S-adenosyl-L-methionine-dependent methyltransferases"/>
    <property type="match status" value="1"/>
</dbReference>
<dbReference type="PROSITE" id="PS51686">
    <property type="entry name" value="SAM_MT_RSMB_NOP"/>
    <property type="match status" value="1"/>
</dbReference>